<organism>
    <name type="scientific">Mycobacterium tuberculosis (strain ATCC 25618 / H37Rv)</name>
    <dbReference type="NCBI Taxonomy" id="83332"/>
    <lineage>
        <taxon>Bacteria</taxon>
        <taxon>Bacillati</taxon>
        <taxon>Actinomycetota</taxon>
        <taxon>Actinomycetes</taxon>
        <taxon>Mycobacteriales</taxon>
        <taxon>Mycobacteriaceae</taxon>
        <taxon>Mycobacterium</taxon>
        <taxon>Mycobacterium tuberculosis complex</taxon>
    </lineage>
</organism>
<protein>
    <recommendedName>
        <fullName>Group 1 truncated hemoglobin GlbN</fullName>
        <shortName>Truncated hemoglobin</shortName>
        <shortName>trHbN</shortName>
    </recommendedName>
    <alternativeName>
        <fullName>Hemoglobin-like protein HbN</fullName>
    </alternativeName>
</protein>
<comment type="function">
    <text>Binds oxygen cooperatively with very high affinity (P(50) = 0.013 mmHg at 20 degrees Celsius) because of a fast combination (25 microM(-1)sec(-1)) and a slow dissociation (0.2 sec(-1)) rate.</text>
</comment>
<comment type="cofactor">
    <cofactor>
        <name>heme</name>
        <dbReference type="ChEBI" id="CHEBI:30413"/>
    </cofactor>
    <text>Binds 1 heme group per subunit.</text>
</comment>
<comment type="subunit">
    <text evidence="1">Homodimer.</text>
</comment>
<comment type="miscellaneous">
    <text>Was identified as a high-confidence drug target.</text>
</comment>
<comment type="similarity">
    <text evidence="2">Belongs to the truncated hemoglobin family. Group I subfamily.</text>
</comment>
<reference key="1">
    <citation type="journal article" date="1998" name="Nature">
        <title>Deciphering the biology of Mycobacterium tuberculosis from the complete genome sequence.</title>
        <authorList>
            <person name="Cole S.T."/>
            <person name="Brosch R."/>
            <person name="Parkhill J."/>
            <person name="Garnier T."/>
            <person name="Churcher C.M."/>
            <person name="Harris D.E."/>
            <person name="Gordon S.V."/>
            <person name="Eiglmeier K."/>
            <person name="Gas S."/>
            <person name="Barry C.E. III"/>
            <person name="Tekaia F."/>
            <person name="Badcock K."/>
            <person name="Basham D."/>
            <person name="Brown D."/>
            <person name="Chillingworth T."/>
            <person name="Connor R."/>
            <person name="Davies R.M."/>
            <person name="Devlin K."/>
            <person name="Feltwell T."/>
            <person name="Gentles S."/>
            <person name="Hamlin N."/>
            <person name="Holroyd S."/>
            <person name="Hornsby T."/>
            <person name="Jagels K."/>
            <person name="Krogh A."/>
            <person name="McLean J."/>
            <person name="Moule S."/>
            <person name="Murphy L.D."/>
            <person name="Oliver S."/>
            <person name="Osborne J."/>
            <person name="Quail M.A."/>
            <person name="Rajandream M.A."/>
            <person name="Rogers J."/>
            <person name="Rutter S."/>
            <person name="Seeger K."/>
            <person name="Skelton S."/>
            <person name="Squares S."/>
            <person name="Squares R."/>
            <person name="Sulston J.E."/>
            <person name="Taylor K."/>
            <person name="Whitehead S."/>
            <person name="Barrell B.G."/>
        </authorList>
    </citation>
    <scope>NUCLEOTIDE SEQUENCE [LARGE SCALE GENOMIC DNA]</scope>
    <source>
        <strain>ATCC 25618 / H37Rv</strain>
    </source>
</reference>
<reference key="2">
    <citation type="journal article" date="2000" name="J. Biol. Chem.">
        <title>A cooperative oxygen binding hemoglobin from Mycobacterium tuberculosis. Stabilization of heme ligands by a distal tyrosine residue.</title>
        <authorList>
            <person name="Yeh S.R."/>
            <person name="Couture M."/>
            <person name="Ouellet Y."/>
            <person name="Guertin M."/>
            <person name="Rousseau D.L."/>
        </authorList>
    </citation>
    <scope>CHARACTERIZATION</scope>
</reference>
<reference key="3">
    <citation type="journal article" date="2008" name="BMC Syst. Biol.">
        <title>targetTB: a target identification pipeline for Mycobacterium tuberculosis through an interactome, reactome and genome-scale structural analysis.</title>
        <authorList>
            <person name="Raman K."/>
            <person name="Yeturu K."/>
            <person name="Chandra N."/>
        </authorList>
    </citation>
    <scope>IDENTIFICATION AS A DRUG TARGET [LARGE SCALE ANALYSIS]</scope>
</reference>
<reference key="4">
    <citation type="journal article" date="2011" name="Mol. Cell. Proteomics">
        <title>Proteogenomic analysis of Mycobacterium tuberculosis by high resolution mass spectrometry.</title>
        <authorList>
            <person name="Kelkar D.S."/>
            <person name="Kumar D."/>
            <person name="Kumar P."/>
            <person name="Balakrishnan L."/>
            <person name="Muthusamy B."/>
            <person name="Yadav A.K."/>
            <person name="Shrivastava P."/>
            <person name="Marimuthu A."/>
            <person name="Anand S."/>
            <person name="Sundaram H."/>
            <person name="Kingsbury R."/>
            <person name="Harsha H.C."/>
            <person name="Nair B."/>
            <person name="Prasad T.S."/>
            <person name="Chauhan D.S."/>
            <person name="Katoch K."/>
            <person name="Katoch V.M."/>
            <person name="Kumar P."/>
            <person name="Chaerkady R."/>
            <person name="Ramachandran S."/>
            <person name="Dash D."/>
            <person name="Pandey A."/>
        </authorList>
    </citation>
    <scope>IDENTIFICATION BY MASS SPECTROMETRY [LARGE SCALE ANALYSIS]</scope>
    <source>
        <strain>ATCC 25618 / H37Rv</strain>
    </source>
</reference>
<reference key="5">
    <citation type="journal article" date="2001" name="EMBO J.">
        <title>Mycobacterium tuberculosis hemoglobin N displays a protein tunnel suited for O2 diffusion to the heme.</title>
        <authorList>
            <person name="Milani M."/>
            <person name="Pesce A."/>
            <person name="Ouellet Y."/>
            <person name="Ascenzi P."/>
            <person name="Guertin M."/>
            <person name="Bolognesi M."/>
        </authorList>
    </citation>
    <scope>X-RAY CRYSTALLOGRAPHY (1.9 ANGSTROMS) IN THE OXY-FORM</scope>
    <scope>SUBUNIT</scope>
    <scope>HEME COFACTOR</scope>
</reference>
<reference key="6">
    <citation type="journal article" date="2004" name="Biochemistry">
        <title>Cyanide binding to truncated hemoglobins: a crystallographic and kinetic study.</title>
        <authorList>
            <person name="Milani M."/>
            <person name="Ouellet Y."/>
            <person name="Ouellet H."/>
            <person name="Guertin M."/>
            <person name="Boffi A."/>
            <person name="Antonini G."/>
            <person name="Bocedi A."/>
            <person name="Mattu M."/>
            <person name="Bolognesi M."/>
            <person name="Ascenzi P."/>
        </authorList>
    </citation>
    <scope>X-RAY CRYSTALLOGRAPHY (2.0 ANGSTROMS) IN THE FE(3+)-CYANIDE-DERIVATIVE FORM</scope>
</reference>
<reference key="7">
    <citation type="journal article" date="2004" name="J. Biol. Chem.">
        <title>Heme-ligand tunneling in group I truncated hemoglobins.</title>
        <authorList>
            <person name="Milani M."/>
            <person name="Pesce A."/>
            <person name="Ouellet Y."/>
            <person name="Dewilde S."/>
            <person name="Friedman J."/>
            <person name="Ascenzi P."/>
            <person name="Guertin M."/>
            <person name="Bolognesi M."/>
        </authorList>
    </citation>
    <scope>X-RAY CRYSTALLOGRAPHY (2.1 ANGSTROMS) IN THE CYANO-MET FORM</scope>
</reference>
<reference key="8">
    <citation type="journal article" date="2006" name="Biochemistry">
        <title>Ligand interactions in the distal heme pocket of Mycobacterium tuberculosis truncated hemoglobin N: roles of TyrB10 and GlnE11 residues.</title>
        <authorList>
            <person name="Ouellet Y."/>
            <person name="Milani M."/>
            <person name="Couture M."/>
            <person name="Bolognesi M."/>
            <person name="Guertin M."/>
        </authorList>
    </citation>
    <scope>X-RAY CRYSTALLOGRAPHY (1.73 ANGSTROMS) IN THE CYANO-MET FORM</scope>
</reference>
<feature type="chain" id="PRO_0000162640" description="Group 1 truncated hemoglobin GlbN">
    <location>
        <begin position="1"/>
        <end position="136"/>
    </location>
</feature>
<feature type="binding site" description="proximal binding residue">
    <location>
        <position position="81"/>
    </location>
    <ligand>
        <name>heme</name>
        <dbReference type="ChEBI" id="CHEBI:30413"/>
    </ligand>
    <ligandPart>
        <name>Fe</name>
        <dbReference type="ChEBI" id="CHEBI:18248"/>
    </ligandPart>
</feature>
<feature type="helix" evidence="3">
    <location>
        <begin position="3"/>
        <end position="8"/>
    </location>
</feature>
<feature type="helix" evidence="4">
    <location>
        <begin position="15"/>
        <end position="19"/>
    </location>
</feature>
<feature type="helix" evidence="4">
    <location>
        <begin position="21"/>
        <end position="38"/>
    </location>
</feature>
<feature type="turn" evidence="4">
    <location>
        <begin position="40"/>
        <end position="42"/>
    </location>
</feature>
<feature type="helix" evidence="4">
    <location>
        <begin position="43"/>
        <end position="46"/>
    </location>
</feature>
<feature type="helix" evidence="4">
    <location>
        <begin position="51"/>
        <end position="65"/>
    </location>
</feature>
<feature type="helix" evidence="4">
    <location>
        <begin position="77"/>
        <end position="81"/>
    </location>
</feature>
<feature type="helix" evidence="4">
    <location>
        <begin position="88"/>
        <end position="104"/>
    </location>
</feature>
<feature type="helix" evidence="4">
    <location>
        <begin position="109"/>
        <end position="123"/>
    </location>
</feature>
<keyword id="KW-0002">3D-structure</keyword>
<keyword id="KW-0349">Heme</keyword>
<keyword id="KW-0408">Iron</keyword>
<keyword id="KW-0479">Metal-binding</keyword>
<keyword id="KW-0561">Oxygen transport</keyword>
<keyword id="KW-1185">Reference proteome</keyword>
<keyword id="KW-0813">Transport</keyword>
<accession>P9WN25</accession>
<accession>L0T6Z0</accession>
<accession>P0A592</accession>
<accession>Q10784</accession>
<sequence length="136" mass="14449">MGLLSRLRKREPISIYDKIGGHEAIEVVVEDFYVRVLADDQLSAFFSGTNMSRLKGKQVEFFAAALGGPEPYTGAPMKQVHQGRGITMHHFSLVAGHLADALTAAGVPSETITEILGVIAPLAVDVTSGESTTAPV</sequence>
<gene>
    <name type="primary">glbN</name>
    <name type="ordered locus">Rv1542c</name>
    <name type="ORF">MTCY48.23</name>
</gene>
<name>TRHBN_MYCTU</name>
<proteinExistence type="evidence at protein level"/>
<evidence type="ECO:0000269" key="1">
    <source>
    </source>
</evidence>
<evidence type="ECO:0000305" key="2"/>
<evidence type="ECO:0007829" key="3">
    <source>
        <dbReference type="PDB" id="2GKM"/>
    </source>
</evidence>
<evidence type="ECO:0007829" key="4">
    <source>
        <dbReference type="PDB" id="5AB8"/>
    </source>
</evidence>
<dbReference type="EMBL" id="AL123456">
    <property type="protein sequence ID" value="CCP44306.1"/>
    <property type="molecule type" value="Genomic_DNA"/>
</dbReference>
<dbReference type="PIR" id="C70761">
    <property type="entry name" value="C70761"/>
</dbReference>
<dbReference type="RefSeq" id="NP_216058.1">
    <property type="nucleotide sequence ID" value="NC_000962.3"/>
</dbReference>
<dbReference type="RefSeq" id="WP_003407730.1">
    <property type="nucleotide sequence ID" value="NZ_NVQJ01000004.1"/>
</dbReference>
<dbReference type="PDB" id="1IDR">
    <property type="method" value="X-ray"/>
    <property type="resolution" value="1.90 A"/>
    <property type="chains" value="A/B=1-136"/>
</dbReference>
<dbReference type="PDB" id="1RTE">
    <property type="method" value="X-ray"/>
    <property type="resolution" value="2.00 A"/>
    <property type="chains" value="A/B=1-136"/>
</dbReference>
<dbReference type="PDB" id="1S56">
    <property type="method" value="X-ray"/>
    <property type="resolution" value="2.43 A"/>
    <property type="chains" value="A/B=1-136"/>
</dbReference>
<dbReference type="PDB" id="1S61">
    <property type="method" value="X-ray"/>
    <property type="resolution" value="2.10 A"/>
    <property type="chains" value="A/B=1-136"/>
</dbReference>
<dbReference type="PDB" id="2GKM">
    <property type="method" value="X-ray"/>
    <property type="resolution" value="1.73 A"/>
    <property type="chains" value="A/B=1-136"/>
</dbReference>
<dbReference type="PDB" id="2GKN">
    <property type="method" value="X-ray"/>
    <property type="resolution" value="2.10 A"/>
    <property type="chains" value="A/B=1-136"/>
</dbReference>
<dbReference type="PDB" id="2GL3">
    <property type="method" value="X-ray"/>
    <property type="resolution" value="1.92 A"/>
    <property type="chains" value="A/B=1-136"/>
</dbReference>
<dbReference type="PDB" id="2GLN">
    <property type="method" value="X-ray"/>
    <property type="resolution" value="1.98 A"/>
    <property type="chains" value="A/B=1-136"/>
</dbReference>
<dbReference type="PDB" id="5AB8">
    <property type="method" value="X-ray"/>
    <property type="resolution" value="1.53 A"/>
    <property type="chains" value="A=12-136"/>
</dbReference>
<dbReference type="PDBsum" id="1IDR"/>
<dbReference type="PDBsum" id="1RTE"/>
<dbReference type="PDBsum" id="1S56"/>
<dbReference type="PDBsum" id="1S61"/>
<dbReference type="PDBsum" id="2GKM"/>
<dbReference type="PDBsum" id="2GKN"/>
<dbReference type="PDBsum" id="2GL3"/>
<dbReference type="PDBsum" id="2GLN"/>
<dbReference type="PDBsum" id="5AB8"/>
<dbReference type="BMRB" id="P9WN25"/>
<dbReference type="SMR" id="P9WN25"/>
<dbReference type="STRING" id="83332.Rv1542c"/>
<dbReference type="DrugBank" id="DB03317">
    <property type="generic name" value="Ferroheme C"/>
</dbReference>
<dbReference type="DrugBank" id="DB01826">
    <property type="generic name" value="N-Butyl Isocyanide"/>
</dbReference>
<dbReference type="PaxDb" id="83332-Rv1542c"/>
<dbReference type="DNASU" id="886402"/>
<dbReference type="GeneID" id="45425525"/>
<dbReference type="GeneID" id="886402"/>
<dbReference type="KEGG" id="mtu:Rv1542c"/>
<dbReference type="KEGG" id="mtv:RVBD_1542c"/>
<dbReference type="TubercuList" id="Rv1542c"/>
<dbReference type="eggNOG" id="COG2346">
    <property type="taxonomic scope" value="Bacteria"/>
</dbReference>
<dbReference type="InParanoid" id="P9WN25"/>
<dbReference type="OrthoDB" id="9798157at2"/>
<dbReference type="PhylomeDB" id="P9WN25"/>
<dbReference type="Reactome" id="R-HSA-1222538">
    <property type="pathway name" value="Tolerance by Mtb to nitric oxide produced by macrophages"/>
</dbReference>
<dbReference type="EvolutionaryTrace" id="P9WN25"/>
<dbReference type="Proteomes" id="UP000001584">
    <property type="component" value="Chromosome"/>
</dbReference>
<dbReference type="GO" id="GO:0005737">
    <property type="term" value="C:cytoplasm"/>
    <property type="evidence" value="ECO:0000318"/>
    <property type="project" value="GO_Central"/>
</dbReference>
<dbReference type="GO" id="GO:0005829">
    <property type="term" value="C:cytosol"/>
    <property type="evidence" value="ECO:0000304"/>
    <property type="project" value="Reactome"/>
</dbReference>
<dbReference type="GO" id="GO:0020037">
    <property type="term" value="F:heme binding"/>
    <property type="evidence" value="ECO:0000314"/>
    <property type="project" value="MTBBASE"/>
</dbReference>
<dbReference type="GO" id="GO:0046872">
    <property type="term" value="F:metal ion binding"/>
    <property type="evidence" value="ECO:0007669"/>
    <property type="project" value="UniProtKB-KW"/>
</dbReference>
<dbReference type="GO" id="GO:0008941">
    <property type="term" value="F:nitric oxide dioxygenase NAD(P)H activity"/>
    <property type="evidence" value="ECO:0000314"/>
    <property type="project" value="MTBBASE"/>
</dbReference>
<dbReference type="GO" id="GO:0019825">
    <property type="term" value="F:oxygen binding"/>
    <property type="evidence" value="ECO:0000314"/>
    <property type="project" value="MTBBASE"/>
</dbReference>
<dbReference type="GO" id="GO:0005344">
    <property type="term" value="F:oxygen carrier activity"/>
    <property type="evidence" value="ECO:0007669"/>
    <property type="project" value="UniProtKB-KW"/>
</dbReference>
<dbReference type="GO" id="GO:0008379">
    <property type="term" value="F:thioredoxin peroxidase activity"/>
    <property type="evidence" value="ECO:0000318"/>
    <property type="project" value="GO_Central"/>
</dbReference>
<dbReference type="GO" id="GO:0045454">
    <property type="term" value="P:cell redox homeostasis"/>
    <property type="evidence" value="ECO:0000318"/>
    <property type="project" value="GO_Central"/>
</dbReference>
<dbReference type="GO" id="GO:0034599">
    <property type="term" value="P:cellular response to oxidative stress"/>
    <property type="evidence" value="ECO:0000318"/>
    <property type="project" value="GO_Central"/>
</dbReference>
<dbReference type="GO" id="GO:0051410">
    <property type="term" value="P:detoxification of nitrogen compound"/>
    <property type="evidence" value="ECO:0000314"/>
    <property type="project" value="MTBBASE"/>
</dbReference>
<dbReference type="GO" id="GO:0046210">
    <property type="term" value="P:nitric oxide catabolic process"/>
    <property type="evidence" value="ECO:0000315"/>
    <property type="project" value="MTBBASE"/>
</dbReference>
<dbReference type="CDD" id="cd14756">
    <property type="entry name" value="TrHb"/>
    <property type="match status" value="1"/>
</dbReference>
<dbReference type="FunFam" id="1.10.490.10:FF:000010">
    <property type="entry name" value="Group 1 truncated hemoglobin"/>
    <property type="match status" value="1"/>
</dbReference>
<dbReference type="Gene3D" id="1.10.490.10">
    <property type="entry name" value="Globins"/>
    <property type="match status" value="1"/>
</dbReference>
<dbReference type="InterPro" id="IPR009050">
    <property type="entry name" value="Globin-like_sf"/>
</dbReference>
<dbReference type="InterPro" id="IPR012292">
    <property type="entry name" value="Globin/Proto"/>
</dbReference>
<dbReference type="InterPro" id="IPR019795">
    <property type="entry name" value="Globin_bac-like_CS"/>
</dbReference>
<dbReference type="InterPro" id="IPR001486">
    <property type="entry name" value="Hemoglobin_trunc"/>
</dbReference>
<dbReference type="InterPro" id="IPR016339">
    <property type="entry name" value="Hemoglobin_trunc_I"/>
</dbReference>
<dbReference type="Pfam" id="PF01152">
    <property type="entry name" value="Bac_globin"/>
    <property type="match status" value="1"/>
</dbReference>
<dbReference type="PIRSF" id="PIRSF002030">
    <property type="entry name" value="Globin_Protozoa/Cyanobacteria"/>
    <property type="match status" value="1"/>
</dbReference>
<dbReference type="SUPFAM" id="SSF46458">
    <property type="entry name" value="Globin-like"/>
    <property type="match status" value="1"/>
</dbReference>
<dbReference type="PROSITE" id="PS01213">
    <property type="entry name" value="GLOBIN_FAM_2"/>
    <property type="match status" value="1"/>
</dbReference>